<name>HMPTM_METJA</name>
<keyword id="KW-0002">3D-structure</keyword>
<keyword id="KW-0004">4Fe-4S</keyword>
<keyword id="KW-0408">Iron</keyword>
<keyword id="KW-0411">Iron-sulfur</keyword>
<keyword id="KW-0479">Metal-binding</keyword>
<keyword id="KW-0489">Methyltransferase</keyword>
<keyword id="KW-1185">Reference proteome</keyword>
<keyword id="KW-0949">S-adenosyl-L-methionine</keyword>
<keyword id="KW-0808">Transferase</keyword>
<reference key="1">
    <citation type="journal article" date="1996" name="Science">
        <title>Complete genome sequence of the methanogenic archaeon, Methanococcus jannaschii.</title>
        <authorList>
            <person name="Bult C.J."/>
            <person name="White O."/>
            <person name="Olsen G.J."/>
            <person name="Zhou L."/>
            <person name="Fleischmann R.D."/>
            <person name="Sutton G.G."/>
            <person name="Blake J.A."/>
            <person name="FitzGerald L.M."/>
            <person name="Clayton R.A."/>
            <person name="Gocayne J.D."/>
            <person name="Kerlavage A.R."/>
            <person name="Dougherty B.A."/>
            <person name="Tomb J.-F."/>
            <person name="Adams M.D."/>
            <person name="Reich C.I."/>
            <person name="Overbeek R."/>
            <person name="Kirkness E.F."/>
            <person name="Weinstock K.G."/>
            <person name="Merrick J.M."/>
            <person name="Glodek A."/>
            <person name="Scott J.L."/>
            <person name="Geoghagen N.S.M."/>
            <person name="Weidman J.F."/>
            <person name="Fuhrmann J.L."/>
            <person name="Nguyen D."/>
            <person name="Utterback T.R."/>
            <person name="Kelley J.M."/>
            <person name="Peterson J.D."/>
            <person name="Sadow P.W."/>
            <person name="Hanna M.C."/>
            <person name="Cotton M.D."/>
            <person name="Roberts K.M."/>
            <person name="Hurst M.A."/>
            <person name="Kaine B.P."/>
            <person name="Borodovsky M."/>
            <person name="Klenk H.-P."/>
            <person name="Fraser C.M."/>
            <person name="Smith H.O."/>
            <person name="Woese C.R."/>
            <person name="Venter J.C."/>
        </authorList>
    </citation>
    <scope>NUCLEOTIDE SEQUENCE [LARGE SCALE GENOMIC DNA]</scope>
    <source>
        <strain>ATCC 43067 / DSM 2661 / JAL-1 / JCM 10045 / NBRC 100440</strain>
    </source>
</reference>
<reference key="2">
    <citation type="journal article" date="2014" name="J. Bacteriol.">
        <title>Identification of a unique radical S-Adenosylmethionine methylase likely involved in methanopterin biosynthesis in Methanocaldococcus jannaschii.</title>
        <authorList>
            <person name="Allen K.D."/>
            <person name="Xu H."/>
            <person name="White R.H."/>
        </authorList>
    </citation>
    <scope>FUNCTION AS A METHYLTRANSFERASE</scope>
    <scope>REACTION MECHANISM</scope>
    <scope>MUTAGENESIS OF CYS-77 AND CYS-102</scope>
</reference>
<comment type="function">
    <text evidence="2">Is responsible for the addition of methyl groups at C-7 and C-9 of the pterin ring during methanopterin (MPT) biosynthesis. Catalyzes methylation of 7,8-dihydro-6-hydroxymethylpterin, likely using methylenetetrahydromethanopterin as a methyl group donor, via a radical-based mechanism.</text>
</comment>
<comment type="cofactor">
    <cofactor evidence="5">
        <name>[4Fe-4S] cluster</name>
        <dbReference type="ChEBI" id="CHEBI:49883"/>
    </cofactor>
    <text evidence="5">Binds 2 [4Fe-4S] clusters. The clusters are coordinated with 3 cysteines and an exchangeable S-adenosyl-L-methionine.</text>
</comment>
<comment type="cofactor">
    <cofactor evidence="5">
        <name>S-adenosyl-L-methionine</name>
        <dbReference type="ChEBI" id="CHEBI:59789"/>
    </cofactor>
    <text evidence="5">Binds 2 S-adenosyl-L-methionine per subunit.</text>
</comment>
<comment type="pathway">
    <text evidence="3">Cofactor biosynthesis; 5,6,7,8-tetrahydromethanopterin biosynthesis.</text>
</comment>
<comment type="miscellaneous">
    <text evidence="2">The most N-terminal iron-sulfur cluster is involved in C-9 methylation, while the second cluster is required for C-7 methylation of the pterin ring. Moreover, C-7 methylation occurs before C-9 methylation.</text>
</comment>
<comment type="similarity">
    <text evidence="4">Belongs to the radical SAM superfamily.</text>
</comment>
<gene>
    <name type="ordered locus">MJ0619</name>
</gene>
<feature type="chain" id="PRO_0000106960" description="7,8-dihydro-6-hydroxymethylpterin dimethyltransferase">
    <location>
        <begin position="1"/>
        <end position="506"/>
    </location>
</feature>
<feature type="domain" description="Radical SAM core" evidence="1">
    <location>
        <begin position="82"/>
        <end position="300"/>
    </location>
</feature>
<feature type="binding site" evidence="3">
    <location>
        <position position="73"/>
    </location>
    <ligand>
        <name>[4Fe-4S] cluster</name>
        <dbReference type="ChEBI" id="CHEBI:49883"/>
        <label>1</label>
        <note>4Fe-4S-S-AdoMet</note>
    </ligand>
</feature>
<feature type="binding site" evidence="3">
    <location>
        <position position="77"/>
    </location>
    <ligand>
        <name>[4Fe-4S] cluster</name>
        <dbReference type="ChEBI" id="CHEBI:49883"/>
        <label>1</label>
        <note>4Fe-4S-S-AdoMet</note>
    </ligand>
</feature>
<feature type="binding site" evidence="3">
    <location>
        <position position="80"/>
    </location>
    <ligand>
        <name>[4Fe-4S] cluster</name>
        <dbReference type="ChEBI" id="CHEBI:49883"/>
        <label>1</label>
        <note>4Fe-4S-S-AdoMet</note>
    </ligand>
</feature>
<feature type="binding site" evidence="3">
    <location>
        <position position="98"/>
    </location>
    <ligand>
        <name>[4Fe-4S] cluster</name>
        <dbReference type="ChEBI" id="CHEBI:49883"/>
        <label>2</label>
        <note>4Fe-4S-S-AdoMet</note>
    </ligand>
</feature>
<feature type="binding site" evidence="3">
    <location>
        <position position="102"/>
    </location>
    <ligand>
        <name>[4Fe-4S] cluster</name>
        <dbReference type="ChEBI" id="CHEBI:49883"/>
        <label>2</label>
        <note>4Fe-4S-S-AdoMet</note>
    </ligand>
</feature>
<feature type="binding site" evidence="3">
    <location>
        <position position="105"/>
    </location>
    <ligand>
        <name>[4Fe-4S] cluster</name>
        <dbReference type="ChEBI" id="CHEBI:49883"/>
        <label>2</label>
        <note>4Fe-4S-S-AdoMet</note>
    </ligand>
</feature>
<feature type="mutagenesis site" description="Loss of C9-methylation but C7-methylation is still observed." evidence="2">
    <original>C</original>
    <variation>A</variation>
    <location>
        <position position="77"/>
    </location>
</feature>
<feature type="mutagenesis site" description="Loss of methylation activity." evidence="2">
    <original>C</original>
    <variation>A</variation>
    <location>
        <position position="102"/>
    </location>
</feature>
<feature type="strand" evidence="6">
    <location>
        <begin position="1"/>
        <end position="8"/>
    </location>
</feature>
<feature type="turn" evidence="6">
    <location>
        <begin position="10"/>
        <end position="12"/>
    </location>
</feature>
<feature type="strand" evidence="6">
    <location>
        <begin position="15"/>
        <end position="23"/>
    </location>
</feature>
<feature type="strand" evidence="6">
    <location>
        <begin position="26"/>
        <end position="33"/>
    </location>
</feature>
<feature type="turn" evidence="6">
    <location>
        <begin position="34"/>
        <end position="36"/>
    </location>
</feature>
<feature type="strand" evidence="6">
    <location>
        <begin position="37"/>
        <end position="45"/>
    </location>
</feature>
<feature type="helix" evidence="6">
    <location>
        <begin position="47"/>
        <end position="54"/>
    </location>
</feature>
<feature type="strand" evidence="6">
    <location>
        <begin position="88"/>
        <end position="93"/>
    </location>
</feature>
<feature type="strand" evidence="6">
    <location>
        <begin position="103"/>
        <end position="105"/>
    </location>
</feature>
<feature type="strand" evidence="6">
    <location>
        <begin position="112"/>
        <end position="116"/>
    </location>
</feature>
<feature type="helix" evidence="6">
    <location>
        <begin position="120"/>
        <end position="131"/>
    </location>
</feature>
<feature type="strand" evidence="6">
    <location>
        <begin position="133"/>
        <end position="135"/>
    </location>
</feature>
<feature type="strand" evidence="6">
    <location>
        <begin position="139"/>
        <end position="145"/>
    </location>
</feature>
<feature type="helix" evidence="6">
    <location>
        <begin position="147"/>
        <end position="149"/>
    </location>
</feature>
<feature type="helix" evidence="6">
    <location>
        <begin position="153"/>
        <end position="162"/>
    </location>
</feature>
<feature type="strand" evidence="6">
    <location>
        <begin position="166"/>
        <end position="172"/>
    </location>
</feature>
<feature type="helix" evidence="6">
    <location>
        <begin position="175"/>
        <end position="178"/>
    </location>
</feature>
<feature type="helix" evidence="6">
    <location>
        <begin position="180"/>
        <end position="189"/>
    </location>
</feature>
<feature type="strand" evidence="6">
    <location>
        <begin position="193"/>
        <end position="197"/>
    </location>
</feature>
<feature type="helix" evidence="6">
    <location>
        <begin position="203"/>
        <end position="210"/>
    </location>
</feature>
<feature type="helix" evidence="6">
    <location>
        <begin position="215"/>
        <end position="228"/>
    </location>
</feature>
<feature type="strand" evidence="6">
    <location>
        <begin position="233"/>
        <end position="236"/>
    </location>
</feature>
<feature type="turn" evidence="6">
    <location>
        <begin position="241"/>
        <end position="243"/>
    </location>
</feature>
<feature type="helix" evidence="6">
    <location>
        <begin position="245"/>
        <end position="247"/>
    </location>
</feature>
<feature type="helix" evidence="6">
    <location>
        <begin position="248"/>
        <end position="257"/>
    </location>
</feature>
<feature type="turn" evidence="6">
    <location>
        <begin position="258"/>
        <end position="261"/>
    </location>
</feature>
<feature type="strand" evidence="6">
    <location>
        <begin position="262"/>
        <end position="269"/>
    </location>
</feature>
<feature type="strand" evidence="6">
    <location>
        <begin position="273"/>
        <end position="275"/>
    </location>
</feature>
<feature type="helix" evidence="6">
    <location>
        <begin position="278"/>
        <end position="283"/>
    </location>
</feature>
<feature type="helix" evidence="6">
    <location>
        <begin position="288"/>
        <end position="298"/>
    </location>
</feature>
<feature type="turn" evidence="6">
    <location>
        <begin position="299"/>
        <end position="301"/>
    </location>
</feature>
<feature type="helix" evidence="6">
    <location>
        <begin position="305"/>
        <end position="307"/>
    </location>
</feature>
<feature type="helix" evidence="6">
    <location>
        <begin position="311"/>
        <end position="314"/>
    </location>
</feature>
<feature type="helix" evidence="6">
    <location>
        <begin position="315"/>
        <end position="325"/>
    </location>
</feature>
<feature type="strand" evidence="6">
    <location>
        <begin position="338"/>
        <end position="346"/>
    </location>
</feature>
<feature type="strand" evidence="6">
    <location>
        <begin position="352"/>
        <end position="354"/>
    </location>
</feature>
<feature type="helix" evidence="6">
    <location>
        <begin position="355"/>
        <end position="358"/>
    </location>
</feature>
<feature type="helix" evidence="6">
    <location>
        <begin position="361"/>
        <end position="373"/>
    </location>
</feature>
<feature type="helix" evidence="6">
    <location>
        <begin position="385"/>
        <end position="396"/>
    </location>
</feature>
<feature type="helix" evidence="6">
    <location>
        <begin position="408"/>
        <end position="419"/>
    </location>
</feature>
<feature type="helix" evidence="6">
    <location>
        <begin position="423"/>
        <end position="432"/>
    </location>
</feature>
<feature type="strand" evidence="6">
    <location>
        <begin position="433"/>
        <end position="439"/>
    </location>
</feature>
<feature type="turn" evidence="6">
    <location>
        <begin position="444"/>
        <end position="446"/>
    </location>
</feature>
<feature type="helix" evidence="6">
    <location>
        <begin position="449"/>
        <end position="452"/>
    </location>
</feature>
<feature type="strand" evidence="6">
    <location>
        <begin position="457"/>
        <end position="460"/>
    </location>
</feature>
<feature type="strand" evidence="6">
    <location>
        <begin position="466"/>
        <end position="468"/>
    </location>
</feature>
<feature type="helix" evidence="6">
    <location>
        <begin position="469"/>
        <end position="475"/>
    </location>
</feature>
<feature type="helix" evidence="6">
    <location>
        <begin position="477"/>
        <end position="483"/>
    </location>
</feature>
<feature type="strand" evidence="6">
    <location>
        <begin position="485"/>
        <end position="487"/>
    </location>
</feature>
<feature type="helix" evidence="6">
    <location>
        <begin position="488"/>
        <end position="494"/>
    </location>
</feature>
<evidence type="ECO:0000255" key="1">
    <source>
        <dbReference type="PROSITE-ProRule" id="PRU01266"/>
    </source>
</evidence>
<evidence type="ECO:0000269" key="2">
    <source>
    </source>
</evidence>
<evidence type="ECO:0000303" key="3">
    <source>
    </source>
</evidence>
<evidence type="ECO:0000305" key="4"/>
<evidence type="ECO:0000305" key="5">
    <source>
    </source>
</evidence>
<evidence type="ECO:0007829" key="6">
    <source>
        <dbReference type="PDB" id="7TOM"/>
    </source>
</evidence>
<sequence length="506" mass="57482">MEKKTLSLCPICLKRIPATILEEDGKIIIKKTCPEHGEFKDIYWGDAELYKKFDKYEFIGKIEVTNTKVKNGCPYDCGLCPNHKSTTILANIDVTNRCNLNCPICFANANKSGKVYEPSFEDIKRMMENLRKEIPPTPAIQFAGGEPTVRSDLPELIKLARDMGFLHVQLATNGIKLKNINYLKKLKEAGLSTIYLQFDGISEKPYLVARGKNLLPIKQKVIENCKKVGFDSVVLVPTLVRGVNDNEVGGIIRYAAENVDVVRGINFQPVSFTGRVDEKTLLEGRITIPDFIKLVEEQTDGEITEEDFYPVPSVAPISVLVEKLTNDRKPTLSSHQHCGTSTYVFVDEDGKLIPITRFIDVEGFLEIVKEKIEEIGKSKMHDVKVLGEIALKLPSLIDLDKAPKSVNIKKIIDLILSVLKSDYSALAELHYHMLMISCMHFMDAYNFDVKRVMRCCIHYATPDDRIIPFCTYNTLHRQEVEEKFSIPLEEWKRMHKIGGEDDREDY</sequence>
<proteinExistence type="evidence at protein level"/>
<dbReference type="EC" id="2.1.1.-" evidence="2"/>
<dbReference type="EMBL" id="L77117">
    <property type="protein sequence ID" value="AAB98614.1"/>
    <property type="molecule type" value="Genomic_DNA"/>
</dbReference>
<dbReference type="PIR" id="C64377">
    <property type="entry name" value="C64377"/>
</dbReference>
<dbReference type="RefSeq" id="WP_010870124.1">
    <property type="nucleotide sequence ID" value="NC_000909.1"/>
</dbReference>
<dbReference type="PDB" id="7TOL">
    <property type="method" value="X-ray"/>
    <property type="resolution" value="2.03 A"/>
    <property type="chains" value="A=1-506"/>
</dbReference>
<dbReference type="PDB" id="7TOM">
    <property type="method" value="X-ray"/>
    <property type="resolution" value="1.85 A"/>
    <property type="chains" value="A=1-506"/>
</dbReference>
<dbReference type="PDBsum" id="7TOL"/>
<dbReference type="PDBsum" id="7TOM"/>
<dbReference type="SMR" id="Q58036"/>
<dbReference type="STRING" id="243232.MJ_0619"/>
<dbReference type="PaxDb" id="243232-MJ_0619"/>
<dbReference type="DNASU" id="1451485"/>
<dbReference type="EnsemblBacteria" id="AAB98614">
    <property type="protein sequence ID" value="AAB98614"/>
    <property type="gene ID" value="MJ_0619"/>
</dbReference>
<dbReference type="GeneID" id="1451485"/>
<dbReference type="KEGG" id="mja:MJ_0619"/>
<dbReference type="eggNOG" id="arCOG00933">
    <property type="taxonomic scope" value="Archaea"/>
</dbReference>
<dbReference type="HOGENOM" id="CLU_023791_0_0_2"/>
<dbReference type="InParanoid" id="Q58036"/>
<dbReference type="OrthoDB" id="49555at2157"/>
<dbReference type="PhylomeDB" id="Q58036"/>
<dbReference type="BioCyc" id="MetaCyc:MJ_RS03275-MONOMER"/>
<dbReference type="UniPathway" id="UPA00065"/>
<dbReference type="Proteomes" id="UP000000805">
    <property type="component" value="Chromosome"/>
</dbReference>
<dbReference type="GO" id="GO:0051539">
    <property type="term" value="F:4 iron, 4 sulfur cluster binding"/>
    <property type="evidence" value="ECO:0007669"/>
    <property type="project" value="UniProtKB-KW"/>
</dbReference>
<dbReference type="GO" id="GO:0046872">
    <property type="term" value="F:metal ion binding"/>
    <property type="evidence" value="ECO:0007669"/>
    <property type="project" value="UniProtKB-KW"/>
</dbReference>
<dbReference type="GO" id="GO:0008168">
    <property type="term" value="F:methyltransferase activity"/>
    <property type="evidence" value="ECO:0007669"/>
    <property type="project" value="UniProtKB-KW"/>
</dbReference>
<dbReference type="GO" id="GO:0032259">
    <property type="term" value="P:methylation"/>
    <property type="evidence" value="ECO:0007669"/>
    <property type="project" value="UniProtKB-KW"/>
</dbReference>
<dbReference type="CDD" id="cd01335">
    <property type="entry name" value="Radical_SAM"/>
    <property type="match status" value="1"/>
</dbReference>
<dbReference type="Gene3D" id="3.20.20.70">
    <property type="entry name" value="Aldolase class I"/>
    <property type="match status" value="1"/>
</dbReference>
<dbReference type="InterPro" id="IPR013785">
    <property type="entry name" value="Aldolase_TIM"/>
</dbReference>
<dbReference type="InterPro" id="IPR034471">
    <property type="entry name" value="GDGT/MA_synthase"/>
</dbReference>
<dbReference type="InterPro" id="IPR034474">
    <property type="entry name" value="Methyltransferase_Class_D"/>
</dbReference>
<dbReference type="InterPro" id="IPR007197">
    <property type="entry name" value="rSAM"/>
</dbReference>
<dbReference type="InterPro" id="IPR056488">
    <property type="entry name" value="Zn_ribbon_HMPTM"/>
</dbReference>
<dbReference type="NCBIfam" id="NF045702">
    <property type="entry name" value="rSAM_GDGT_ether"/>
    <property type="match status" value="1"/>
</dbReference>
<dbReference type="PANTHER" id="PTHR43306">
    <property type="entry name" value="7,8-DIHYDRO-6-HYDROXYMETHYLPTERIN DIMETHYLTRANSFERASE"/>
    <property type="match status" value="1"/>
</dbReference>
<dbReference type="PANTHER" id="PTHR43306:SF1">
    <property type="entry name" value="7,8-DIHYDRO-6-HYDROXYMETHYLPTERIN DIMETHYLTRANSFERASE"/>
    <property type="match status" value="1"/>
</dbReference>
<dbReference type="Pfam" id="PF13353">
    <property type="entry name" value="Fer4_12"/>
    <property type="match status" value="1"/>
</dbReference>
<dbReference type="Pfam" id="PF04055">
    <property type="entry name" value="Radical_SAM"/>
    <property type="match status" value="1"/>
</dbReference>
<dbReference type="Pfam" id="PF23545">
    <property type="entry name" value="Zn_ribbon_HMPTM"/>
    <property type="match status" value="1"/>
</dbReference>
<dbReference type="SFLD" id="SFLDF00385">
    <property type="entry name" value="7_8-dihydro-6-hydroxymethylpte"/>
    <property type="match status" value="1"/>
</dbReference>
<dbReference type="SFLD" id="SFLDG01100">
    <property type="entry name" value="methyltransferase_(Class_D)"/>
    <property type="match status" value="1"/>
</dbReference>
<dbReference type="SFLD" id="SFLDG01067">
    <property type="entry name" value="SPASM/twitch_domain_containing"/>
    <property type="match status" value="1"/>
</dbReference>
<dbReference type="SUPFAM" id="SSF102114">
    <property type="entry name" value="Radical SAM enzymes"/>
    <property type="match status" value="1"/>
</dbReference>
<dbReference type="PROSITE" id="PS51918">
    <property type="entry name" value="RADICAL_SAM"/>
    <property type="match status" value="1"/>
</dbReference>
<protein>
    <recommendedName>
        <fullName evidence="5">7,8-dihydro-6-hydroxymethylpterin dimethyltransferase</fullName>
        <shortName evidence="5">6-hydroxymethyl-H(2)pterin dimethyltransferase</shortName>
        <ecNumber evidence="2">2.1.1.-</ecNumber>
    </recommendedName>
</protein>
<accession>Q58036</accession>
<organism>
    <name type="scientific">Methanocaldococcus jannaschii (strain ATCC 43067 / DSM 2661 / JAL-1 / JCM 10045 / NBRC 100440)</name>
    <name type="common">Methanococcus jannaschii</name>
    <dbReference type="NCBI Taxonomy" id="243232"/>
    <lineage>
        <taxon>Archaea</taxon>
        <taxon>Methanobacteriati</taxon>
        <taxon>Methanobacteriota</taxon>
        <taxon>Methanomada group</taxon>
        <taxon>Methanococci</taxon>
        <taxon>Methanococcales</taxon>
        <taxon>Methanocaldococcaceae</taxon>
        <taxon>Methanocaldococcus</taxon>
    </lineage>
</organism>